<keyword id="KW-0520">NAD</keyword>
<keyword id="KW-0560">Oxidoreductase</keyword>
<keyword id="KW-1185">Reference proteome</keyword>
<keyword id="KW-0816">Tricarboxylic acid cycle</keyword>
<accession>Q5GT41</accession>
<protein>
    <recommendedName>
        <fullName evidence="1">Malate dehydrogenase</fullName>
        <ecNumber evidence="1">1.1.1.37</ecNumber>
    </recommendedName>
</protein>
<name>MDH_WOLTR</name>
<reference key="1">
    <citation type="journal article" date="2005" name="PLoS Biol.">
        <title>The Wolbachia genome of Brugia malayi: endosymbiont evolution within a human pathogenic nematode.</title>
        <authorList>
            <person name="Foster J."/>
            <person name="Ganatra M."/>
            <person name="Kamal I."/>
            <person name="Ware J."/>
            <person name="Makarova K."/>
            <person name="Ivanova N."/>
            <person name="Bhattacharyya A."/>
            <person name="Kapatral V."/>
            <person name="Kumar S."/>
            <person name="Posfai J."/>
            <person name="Vincze T."/>
            <person name="Ingram J."/>
            <person name="Moran L."/>
            <person name="Lapidus A."/>
            <person name="Omelchenko M."/>
            <person name="Kyrpides N."/>
            <person name="Ghedin E."/>
            <person name="Wang S."/>
            <person name="Goltsman E."/>
            <person name="Joukov V."/>
            <person name="Ostrovskaya O."/>
            <person name="Tsukerman K."/>
            <person name="Mazur M."/>
            <person name="Comb D."/>
            <person name="Koonin E."/>
            <person name="Slatko B."/>
        </authorList>
    </citation>
    <scope>NUCLEOTIDE SEQUENCE [LARGE SCALE GENOMIC DNA]</scope>
    <source>
        <strain>TRS</strain>
    </source>
</reference>
<gene>
    <name evidence="1" type="primary">mdh</name>
    <name type="ordered locus">Wbm0244</name>
</gene>
<feature type="chain" id="PRO_0000113478" description="Malate dehydrogenase">
    <location>
        <begin position="1"/>
        <end position="316"/>
    </location>
</feature>
<feature type="active site" description="Proton acceptor" evidence="1">
    <location>
        <position position="178"/>
    </location>
</feature>
<feature type="binding site" evidence="1">
    <location>
        <begin position="12"/>
        <end position="17"/>
    </location>
    <ligand>
        <name>NAD(+)</name>
        <dbReference type="ChEBI" id="CHEBI:57540"/>
    </ligand>
</feature>
<feature type="binding site" evidence="1">
    <location>
        <position position="36"/>
    </location>
    <ligand>
        <name>NAD(+)</name>
        <dbReference type="ChEBI" id="CHEBI:57540"/>
    </ligand>
</feature>
<feature type="binding site" evidence="1">
    <location>
        <position position="85"/>
    </location>
    <ligand>
        <name>substrate</name>
    </ligand>
</feature>
<feature type="binding site" evidence="1">
    <location>
        <position position="91"/>
    </location>
    <ligand>
        <name>substrate</name>
    </ligand>
</feature>
<feature type="binding site" evidence="1">
    <location>
        <position position="98"/>
    </location>
    <ligand>
        <name>NAD(+)</name>
        <dbReference type="ChEBI" id="CHEBI:57540"/>
    </ligand>
</feature>
<feature type="binding site" evidence="1">
    <location>
        <begin position="121"/>
        <end position="123"/>
    </location>
    <ligand>
        <name>NAD(+)</name>
        <dbReference type="ChEBI" id="CHEBI:57540"/>
    </ligand>
</feature>
<feature type="binding site" evidence="1">
    <location>
        <position position="123"/>
    </location>
    <ligand>
        <name>substrate</name>
    </ligand>
</feature>
<feature type="binding site" evidence="1">
    <location>
        <position position="154"/>
    </location>
    <ligand>
        <name>substrate</name>
    </ligand>
</feature>
<sequence length="316" mass="34224">MTVQRKKISLIGAGNIGGALAHMVTLRELGDVVLFDVNDGIPQGKALDIAESSPIGGFSVNIIGTNRYGDIKNSDAIIITAGIARKPGMSRDDLLQTNAKVMKEVGENIRKYSPNAFVIVVTNPLDAMVSVVHKFSNLPANMIVGMAGVLDSSRFRYFLARELNISVEDVSAFVLGGHGDTMVPLIRCASIAGIPLTQIIDMGLITQEKVDEIVKRTRNGGKEIIDLLKSGSAYYAPASSSIYMLESYLRDEKRILPCATYLNGEYGVKDLFIGVPVIIGKNGIEKVLEVKMDDSEQEMFNKSVNAVKELVKSLSL</sequence>
<dbReference type="EC" id="1.1.1.37" evidence="1"/>
<dbReference type="EMBL" id="AE017321">
    <property type="protein sequence ID" value="AAW70833.1"/>
    <property type="molecule type" value="Genomic_DNA"/>
</dbReference>
<dbReference type="RefSeq" id="WP_011256443.1">
    <property type="nucleotide sequence ID" value="NC_006833.1"/>
</dbReference>
<dbReference type="SMR" id="Q5GT41"/>
<dbReference type="STRING" id="292805.Wbm0244"/>
<dbReference type="KEGG" id="wbm:Wbm0244"/>
<dbReference type="eggNOG" id="COG0039">
    <property type="taxonomic scope" value="Bacteria"/>
</dbReference>
<dbReference type="HOGENOM" id="CLU_045401_2_1_5"/>
<dbReference type="Proteomes" id="UP000000534">
    <property type="component" value="Chromosome"/>
</dbReference>
<dbReference type="GO" id="GO:0004459">
    <property type="term" value="F:L-lactate dehydrogenase activity"/>
    <property type="evidence" value="ECO:0007669"/>
    <property type="project" value="TreeGrafter"/>
</dbReference>
<dbReference type="GO" id="GO:0030060">
    <property type="term" value="F:L-malate dehydrogenase (NAD+) activity"/>
    <property type="evidence" value="ECO:0007669"/>
    <property type="project" value="UniProtKB-UniRule"/>
</dbReference>
<dbReference type="GO" id="GO:0006089">
    <property type="term" value="P:lactate metabolic process"/>
    <property type="evidence" value="ECO:0007669"/>
    <property type="project" value="TreeGrafter"/>
</dbReference>
<dbReference type="GO" id="GO:0006099">
    <property type="term" value="P:tricarboxylic acid cycle"/>
    <property type="evidence" value="ECO:0007669"/>
    <property type="project" value="UniProtKB-UniRule"/>
</dbReference>
<dbReference type="CDD" id="cd01339">
    <property type="entry name" value="LDH-like_MDH"/>
    <property type="match status" value="1"/>
</dbReference>
<dbReference type="FunFam" id="3.40.50.720:FF:000018">
    <property type="entry name" value="Malate dehydrogenase"/>
    <property type="match status" value="1"/>
</dbReference>
<dbReference type="FunFam" id="3.90.110.10:FF:000004">
    <property type="entry name" value="Malate dehydrogenase"/>
    <property type="match status" value="1"/>
</dbReference>
<dbReference type="Gene3D" id="3.90.110.10">
    <property type="entry name" value="Lactate dehydrogenase/glycoside hydrolase, family 4, C-terminal"/>
    <property type="match status" value="1"/>
</dbReference>
<dbReference type="Gene3D" id="3.40.50.720">
    <property type="entry name" value="NAD(P)-binding Rossmann-like Domain"/>
    <property type="match status" value="1"/>
</dbReference>
<dbReference type="HAMAP" id="MF_00487">
    <property type="entry name" value="Malate_dehydrog_3"/>
    <property type="match status" value="1"/>
</dbReference>
<dbReference type="InterPro" id="IPR001557">
    <property type="entry name" value="L-lactate/malate_DH"/>
</dbReference>
<dbReference type="InterPro" id="IPR022383">
    <property type="entry name" value="Lactate/malate_DH_C"/>
</dbReference>
<dbReference type="InterPro" id="IPR001236">
    <property type="entry name" value="Lactate/malate_DH_N"/>
</dbReference>
<dbReference type="InterPro" id="IPR015955">
    <property type="entry name" value="Lactate_DH/Glyco_Ohase_4_C"/>
</dbReference>
<dbReference type="InterPro" id="IPR011275">
    <property type="entry name" value="Malate_DH_type3"/>
</dbReference>
<dbReference type="InterPro" id="IPR036291">
    <property type="entry name" value="NAD(P)-bd_dom_sf"/>
</dbReference>
<dbReference type="NCBIfam" id="TIGR01763">
    <property type="entry name" value="MalateDH_bact"/>
    <property type="match status" value="1"/>
</dbReference>
<dbReference type="NCBIfam" id="NF004863">
    <property type="entry name" value="PRK06223.1"/>
    <property type="match status" value="1"/>
</dbReference>
<dbReference type="PANTHER" id="PTHR43128">
    <property type="entry name" value="L-2-HYDROXYCARBOXYLATE DEHYDROGENASE (NAD(P)(+))"/>
    <property type="match status" value="1"/>
</dbReference>
<dbReference type="PANTHER" id="PTHR43128:SF16">
    <property type="entry name" value="L-LACTATE DEHYDROGENASE"/>
    <property type="match status" value="1"/>
</dbReference>
<dbReference type="Pfam" id="PF02866">
    <property type="entry name" value="Ldh_1_C"/>
    <property type="match status" value="1"/>
</dbReference>
<dbReference type="Pfam" id="PF00056">
    <property type="entry name" value="Ldh_1_N"/>
    <property type="match status" value="1"/>
</dbReference>
<dbReference type="PIRSF" id="PIRSF000102">
    <property type="entry name" value="Lac_mal_DH"/>
    <property type="match status" value="1"/>
</dbReference>
<dbReference type="PRINTS" id="PR00086">
    <property type="entry name" value="LLDHDRGNASE"/>
</dbReference>
<dbReference type="SUPFAM" id="SSF56327">
    <property type="entry name" value="LDH C-terminal domain-like"/>
    <property type="match status" value="1"/>
</dbReference>
<dbReference type="SUPFAM" id="SSF51735">
    <property type="entry name" value="NAD(P)-binding Rossmann-fold domains"/>
    <property type="match status" value="1"/>
</dbReference>
<organism>
    <name type="scientific">Wolbachia sp. subsp. Brugia malayi (strain TRS)</name>
    <dbReference type="NCBI Taxonomy" id="292805"/>
    <lineage>
        <taxon>Bacteria</taxon>
        <taxon>Pseudomonadati</taxon>
        <taxon>Pseudomonadota</taxon>
        <taxon>Alphaproteobacteria</taxon>
        <taxon>Rickettsiales</taxon>
        <taxon>Anaplasmataceae</taxon>
        <taxon>Wolbachieae</taxon>
        <taxon>Wolbachia</taxon>
    </lineage>
</organism>
<comment type="function">
    <text evidence="1">Catalyzes the reversible oxidation of malate to oxaloacetate.</text>
</comment>
<comment type="catalytic activity">
    <reaction evidence="1">
        <text>(S)-malate + NAD(+) = oxaloacetate + NADH + H(+)</text>
        <dbReference type="Rhea" id="RHEA:21432"/>
        <dbReference type="ChEBI" id="CHEBI:15378"/>
        <dbReference type="ChEBI" id="CHEBI:15589"/>
        <dbReference type="ChEBI" id="CHEBI:16452"/>
        <dbReference type="ChEBI" id="CHEBI:57540"/>
        <dbReference type="ChEBI" id="CHEBI:57945"/>
        <dbReference type="EC" id="1.1.1.37"/>
    </reaction>
</comment>
<comment type="similarity">
    <text evidence="1">Belongs to the LDH/MDH superfamily. MDH type 3 family.</text>
</comment>
<proteinExistence type="inferred from homology"/>
<evidence type="ECO:0000255" key="1">
    <source>
        <dbReference type="HAMAP-Rule" id="MF_00487"/>
    </source>
</evidence>